<evidence type="ECO:0000250" key="1"/>
<evidence type="ECO:0000256" key="2">
    <source>
        <dbReference type="SAM" id="MobiDB-lite"/>
    </source>
</evidence>
<evidence type="ECO:0000305" key="3"/>
<proteinExistence type="inferred from homology"/>
<comment type="function">
    <text evidence="1">Transports viral genome to neighboring plant cells directly through plasmosdesmata, without any budding. The movement protein allows efficient cell to cell propagation, by bypassing the host cell wall barrier. Acts by forming a tubular structure at the host plasmodesmata, enlarging it enough to allow free passage of virion capsids (By similarity).</text>
</comment>
<comment type="subcellular location">
    <subcellularLocation>
        <location evidence="1">Host cell junction</location>
        <location evidence="1">Host plasmodesma</location>
    </subcellularLocation>
    <text evidence="1">Assembles into long tubular structures at the surface of the infected protoplast.</text>
</comment>
<comment type="similarity">
    <text evidence="3">Belongs to the cucumovirus movement protein family.</text>
</comment>
<keyword id="KW-1031">Host cell junction</keyword>
<keyword id="KW-0813">Transport</keyword>
<keyword id="KW-0916">Viral movement protein</keyword>
<organism>
    <name type="scientific">Cucumber mosaic virus (strain O)</name>
    <name type="common">CMV</name>
    <dbReference type="NCBI Taxonomy" id="12309"/>
    <lineage>
        <taxon>Viruses</taxon>
        <taxon>Riboviria</taxon>
        <taxon>Orthornavirae</taxon>
        <taxon>Kitrinoviricota</taxon>
        <taxon>Alsuviricetes</taxon>
        <taxon>Martellivirales</taxon>
        <taxon>Bromoviridae</taxon>
        <taxon>Cucumovirus</taxon>
        <taxon>Cucumber mosaic virus</taxon>
    </lineage>
</organism>
<reference key="1">
    <citation type="journal article" date="1989" name="J. Gen. Virol.">
        <title>Complete nucleotide sequence of RNA 3 from cucumber mosaic virus (CMV) strain O: comparative study of nucleotide sequences and amino acid sequences among CMV strains O, Q, D and Y.</title>
        <authorList>
            <person name="Hayakawa T."/>
            <person name="Mizukami M."/>
            <person name="Nakajima M."/>
            <person name="Suzuki M."/>
        </authorList>
    </citation>
    <scope>NUCLEOTIDE SEQUENCE [GENOMIC RNA]</scope>
</reference>
<organismHost>
    <name type="scientific">Cucumis sativus</name>
    <name type="common">Cucumber</name>
    <dbReference type="NCBI Taxonomy" id="3659"/>
</organismHost>
<organismHost>
    <name type="scientific">Nicotiana tabacum</name>
    <name type="common">Common tobacco</name>
    <dbReference type="NCBI Taxonomy" id="4097"/>
</organismHost>
<organismHost>
    <name type="scientific">Solanum lycopersicum</name>
    <name type="common">Tomato</name>
    <name type="synonym">Lycopersicon esculentum</name>
    <dbReference type="NCBI Taxonomy" id="4081"/>
</organismHost>
<feature type="chain" id="PRO_0000083245" description="Movement protein">
    <location>
        <begin position="1"/>
        <end position="279"/>
    </location>
</feature>
<feature type="region of interest" description="Disordered" evidence="2">
    <location>
        <begin position="246"/>
        <end position="279"/>
    </location>
</feature>
<feature type="compositionally biased region" description="Low complexity" evidence="2">
    <location>
        <begin position="254"/>
        <end position="268"/>
    </location>
</feature>
<gene>
    <name type="ORF">ORF3a</name>
</gene>
<accession>P16491</accession>
<protein>
    <recommendedName>
        <fullName>Movement protein</fullName>
        <shortName>MP</shortName>
    </recommendedName>
    <alternativeName>
        <fullName>Protein 3A</fullName>
    </alternativeName>
</protein>
<name>MVP_CMVO</name>
<sequence>MAFQGTSRTLTQQSSAATSDDLQKILFSPEAIKKMATECDLGRHHWMRADSAISVRPLVPEVTHGRIASFFKSGYDVGELCSKGYMSVPQVLCAVTRTVSTDAEGSLRIYLADLGDKELSPIDGQCVSLHNHDLPALVSFQPTYDCPMETVGNRKRCFAVVIERHGYIGYTGTTASVCSNWQARFSSKNNNYTHIAAGKTLVLPFNRLAEQTKPSAVARLLKSQLNNIESSQYLLTNAKINQNARSESEELNVESPPAAIGSSSASRSEAFRPQVVNGL</sequence>
<dbReference type="EMBL" id="D00385">
    <property type="protein sequence ID" value="BAA00296.1"/>
    <property type="molecule type" value="Genomic_RNA"/>
</dbReference>
<dbReference type="PIR" id="JS0089">
    <property type="entry name" value="JS0089"/>
</dbReference>
<dbReference type="GO" id="GO:0044219">
    <property type="term" value="C:host cell plasmodesma"/>
    <property type="evidence" value="ECO:0007669"/>
    <property type="project" value="UniProtKB-SubCell"/>
</dbReference>
<dbReference type="GO" id="GO:0046740">
    <property type="term" value="P:transport of virus in host, cell to cell"/>
    <property type="evidence" value="ECO:0007669"/>
    <property type="project" value="UniProtKB-KW"/>
</dbReference>
<dbReference type="InterPro" id="IPR000603">
    <property type="entry name" value="MPV"/>
</dbReference>
<dbReference type="Pfam" id="PF00803">
    <property type="entry name" value="3A"/>
    <property type="match status" value="1"/>
</dbReference>